<proteinExistence type="inferred from homology"/>
<reference key="1">
    <citation type="submission" date="2006-12" db="EMBL/GenBank/DDBJ databases">
        <title>Complete sequence of Chlorobium phaeobacteroides DSM 266.</title>
        <authorList>
            <consortium name="US DOE Joint Genome Institute"/>
            <person name="Copeland A."/>
            <person name="Lucas S."/>
            <person name="Lapidus A."/>
            <person name="Barry K."/>
            <person name="Detter J.C."/>
            <person name="Glavina del Rio T."/>
            <person name="Hammon N."/>
            <person name="Israni S."/>
            <person name="Pitluck S."/>
            <person name="Goltsman E."/>
            <person name="Schmutz J."/>
            <person name="Larimer F."/>
            <person name="Land M."/>
            <person name="Hauser L."/>
            <person name="Mikhailova N."/>
            <person name="Li T."/>
            <person name="Overmann J."/>
            <person name="Bryant D.A."/>
            <person name="Richardson P."/>
        </authorList>
    </citation>
    <scope>NUCLEOTIDE SEQUENCE [LARGE SCALE GENOMIC DNA]</scope>
    <source>
        <strain>DSM 266 / SMG 266 / 2430</strain>
    </source>
</reference>
<evidence type="ECO:0000255" key="1">
    <source>
        <dbReference type="HAMAP-Rule" id="MF_00533"/>
    </source>
</evidence>
<organism>
    <name type="scientific">Chlorobium phaeobacteroides (strain DSM 266 / SMG 266 / 2430)</name>
    <dbReference type="NCBI Taxonomy" id="290317"/>
    <lineage>
        <taxon>Bacteria</taxon>
        <taxon>Pseudomonadati</taxon>
        <taxon>Chlorobiota</taxon>
        <taxon>Chlorobiia</taxon>
        <taxon>Chlorobiales</taxon>
        <taxon>Chlorobiaceae</taxon>
        <taxon>Chlorobium/Pelodictyon group</taxon>
        <taxon>Chlorobium</taxon>
    </lineage>
</organism>
<comment type="function">
    <text evidence="1">The key enzymatic reactions in nitrogen fixation are catalyzed by the nitrogenase complex, which has 2 components: the iron protein and the molybdenum-iron protein.</text>
</comment>
<comment type="catalytic activity">
    <reaction evidence="1">
        <text>N2 + 8 reduced [2Fe-2S]-[ferredoxin] + 16 ATP + 16 H2O = H2 + 8 oxidized [2Fe-2S]-[ferredoxin] + 2 NH4(+) + 16 ADP + 16 phosphate + 6 H(+)</text>
        <dbReference type="Rhea" id="RHEA:21448"/>
        <dbReference type="Rhea" id="RHEA-COMP:10000"/>
        <dbReference type="Rhea" id="RHEA-COMP:10001"/>
        <dbReference type="ChEBI" id="CHEBI:15377"/>
        <dbReference type="ChEBI" id="CHEBI:15378"/>
        <dbReference type="ChEBI" id="CHEBI:17997"/>
        <dbReference type="ChEBI" id="CHEBI:18276"/>
        <dbReference type="ChEBI" id="CHEBI:28938"/>
        <dbReference type="ChEBI" id="CHEBI:30616"/>
        <dbReference type="ChEBI" id="CHEBI:33737"/>
        <dbReference type="ChEBI" id="CHEBI:33738"/>
        <dbReference type="ChEBI" id="CHEBI:43474"/>
        <dbReference type="ChEBI" id="CHEBI:456216"/>
        <dbReference type="EC" id="1.18.6.1"/>
    </reaction>
</comment>
<comment type="cofactor">
    <cofactor evidence="1">
        <name>[4Fe-4S] cluster</name>
        <dbReference type="ChEBI" id="CHEBI:49883"/>
    </cofactor>
    <text evidence="1">Binds 1 [4Fe-4S] cluster per dimer.</text>
</comment>
<comment type="subunit">
    <text evidence="1">Homodimer.</text>
</comment>
<comment type="PTM">
    <text evidence="1">The reversible ADP-ribosylation of Arg-97 inactivates the nitrogenase reductase and regulates nitrogenase activity.</text>
</comment>
<comment type="similarity">
    <text evidence="1">Belongs to the NifH/BchL/ChlL family.</text>
</comment>
<accession>A1BEH0</accession>
<dbReference type="EC" id="1.18.6.1" evidence="1"/>
<dbReference type="EMBL" id="CP000492">
    <property type="protein sequence ID" value="ABL64797.1"/>
    <property type="molecule type" value="Genomic_DNA"/>
</dbReference>
<dbReference type="RefSeq" id="WP_011744626.1">
    <property type="nucleotide sequence ID" value="NC_008639.1"/>
</dbReference>
<dbReference type="SMR" id="A1BEH0"/>
<dbReference type="STRING" id="290317.Cpha266_0744"/>
<dbReference type="KEGG" id="cph:Cpha266_0744"/>
<dbReference type="eggNOG" id="COG1348">
    <property type="taxonomic scope" value="Bacteria"/>
</dbReference>
<dbReference type="HOGENOM" id="CLU_059373_0_0_10"/>
<dbReference type="OrthoDB" id="9778641at2"/>
<dbReference type="Proteomes" id="UP000008701">
    <property type="component" value="Chromosome"/>
</dbReference>
<dbReference type="GO" id="GO:0051539">
    <property type="term" value="F:4 iron, 4 sulfur cluster binding"/>
    <property type="evidence" value="ECO:0007669"/>
    <property type="project" value="UniProtKB-KW"/>
</dbReference>
<dbReference type="GO" id="GO:0005524">
    <property type="term" value="F:ATP binding"/>
    <property type="evidence" value="ECO:0007669"/>
    <property type="project" value="UniProtKB-UniRule"/>
</dbReference>
<dbReference type="GO" id="GO:0046872">
    <property type="term" value="F:metal ion binding"/>
    <property type="evidence" value="ECO:0007669"/>
    <property type="project" value="UniProtKB-KW"/>
</dbReference>
<dbReference type="GO" id="GO:0016163">
    <property type="term" value="F:nitrogenase activity"/>
    <property type="evidence" value="ECO:0007669"/>
    <property type="project" value="UniProtKB-UniRule"/>
</dbReference>
<dbReference type="GO" id="GO:0009399">
    <property type="term" value="P:nitrogen fixation"/>
    <property type="evidence" value="ECO:0007669"/>
    <property type="project" value="UniProtKB-UniRule"/>
</dbReference>
<dbReference type="CDD" id="cd02040">
    <property type="entry name" value="NifH"/>
    <property type="match status" value="1"/>
</dbReference>
<dbReference type="Gene3D" id="3.40.50.300">
    <property type="entry name" value="P-loop containing nucleotide triphosphate hydrolases"/>
    <property type="match status" value="1"/>
</dbReference>
<dbReference type="HAMAP" id="MF_00533">
    <property type="entry name" value="NifH"/>
    <property type="match status" value="1"/>
</dbReference>
<dbReference type="InterPro" id="IPR030655">
    <property type="entry name" value="NifH/chlL_CS"/>
</dbReference>
<dbReference type="InterPro" id="IPR000392">
    <property type="entry name" value="NifH/frxC"/>
</dbReference>
<dbReference type="InterPro" id="IPR005977">
    <property type="entry name" value="Nitrogenase_Fe_NifH"/>
</dbReference>
<dbReference type="InterPro" id="IPR027417">
    <property type="entry name" value="P-loop_NTPase"/>
</dbReference>
<dbReference type="NCBIfam" id="TIGR01287">
    <property type="entry name" value="nifH"/>
    <property type="match status" value="1"/>
</dbReference>
<dbReference type="PANTHER" id="PTHR42864">
    <property type="entry name" value="LIGHT-INDEPENDENT PROTOCHLOROPHYLLIDE REDUCTASE IRON-SULFUR ATP-BINDING PROTEIN"/>
    <property type="match status" value="1"/>
</dbReference>
<dbReference type="PANTHER" id="PTHR42864:SF2">
    <property type="entry name" value="LIGHT-INDEPENDENT PROTOCHLOROPHYLLIDE REDUCTASE IRON-SULFUR ATP-BINDING PROTEIN"/>
    <property type="match status" value="1"/>
</dbReference>
<dbReference type="Pfam" id="PF00142">
    <property type="entry name" value="Fer4_NifH"/>
    <property type="match status" value="1"/>
</dbReference>
<dbReference type="PIRSF" id="PIRSF000363">
    <property type="entry name" value="Nitrogenase_iron"/>
    <property type="match status" value="1"/>
</dbReference>
<dbReference type="PRINTS" id="PR00091">
    <property type="entry name" value="NITROGNASEII"/>
</dbReference>
<dbReference type="SUPFAM" id="SSF52540">
    <property type="entry name" value="P-loop containing nucleoside triphosphate hydrolases"/>
    <property type="match status" value="1"/>
</dbReference>
<dbReference type="PROSITE" id="PS00746">
    <property type="entry name" value="NIFH_FRXC_1"/>
    <property type="match status" value="1"/>
</dbReference>
<dbReference type="PROSITE" id="PS00692">
    <property type="entry name" value="NIFH_FRXC_2"/>
    <property type="match status" value="1"/>
</dbReference>
<dbReference type="PROSITE" id="PS51026">
    <property type="entry name" value="NIFH_FRXC_3"/>
    <property type="match status" value="1"/>
</dbReference>
<feature type="chain" id="PRO_1000211858" description="Nitrogenase iron protein">
    <location>
        <begin position="1"/>
        <end position="274"/>
    </location>
</feature>
<feature type="binding site" evidence="1">
    <location>
        <begin position="8"/>
        <end position="15"/>
    </location>
    <ligand>
        <name>ATP</name>
        <dbReference type="ChEBI" id="CHEBI:30616"/>
    </ligand>
</feature>
<feature type="binding site" evidence="1">
    <location>
        <position position="94"/>
    </location>
    <ligand>
        <name>[4Fe-4S] cluster</name>
        <dbReference type="ChEBI" id="CHEBI:49883"/>
        <note>ligand shared between dimeric partners</note>
    </ligand>
</feature>
<feature type="binding site" evidence="1">
    <location>
        <position position="131"/>
    </location>
    <ligand>
        <name>[4Fe-4S] cluster</name>
        <dbReference type="ChEBI" id="CHEBI:49883"/>
        <note>ligand shared between dimeric partners</note>
    </ligand>
</feature>
<feature type="modified residue" description="ADP-ribosylarginine; by dinitrogenase reductase ADP-ribosyltransferase" evidence="1">
    <location>
        <position position="97"/>
    </location>
</feature>
<name>NIFH_CHLPD</name>
<protein>
    <recommendedName>
        <fullName evidence="1">Nitrogenase iron protein</fullName>
        <ecNumber evidence="1">1.18.6.1</ecNumber>
    </recommendedName>
    <alternativeName>
        <fullName evidence="1">Nitrogenase Fe protein</fullName>
    </alternativeName>
    <alternativeName>
        <fullName evidence="1">Nitrogenase component II</fullName>
    </alternativeName>
    <alternativeName>
        <fullName evidence="1">Nitrogenase reductase</fullName>
    </alternativeName>
</protein>
<gene>
    <name evidence="1" type="primary">nifH</name>
    <name type="ordered locus">Cpha266_0744</name>
</gene>
<keyword id="KW-0004">4Fe-4S</keyword>
<keyword id="KW-0013">ADP-ribosylation</keyword>
<keyword id="KW-0067">ATP-binding</keyword>
<keyword id="KW-0408">Iron</keyword>
<keyword id="KW-0411">Iron-sulfur</keyword>
<keyword id="KW-0479">Metal-binding</keyword>
<keyword id="KW-0535">Nitrogen fixation</keyword>
<keyword id="KW-0547">Nucleotide-binding</keyword>
<keyword id="KW-0560">Oxidoreductase</keyword>
<keyword id="KW-1185">Reference proteome</keyword>
<sequence>MRKVAIYGKGGIGKSTTTQNTVAGLAEMGMKVMVVGCDPKADSTRLLLGGLQQKTVLDTLREEGEEVELEDIIKEGYRQTRCTESGGPEPGVGCAGRGIITSVNLLEQLGAYDKEWGLDYVFYDVLGDVVCGGFAMPIRDGKAEEIYIVCSGEMMAMYAANNICKGILKYADAGGVRLGGLICNSRKVDNEQAMIEELARKIGTQMIHFVPRDNFVQRAEINRKTVIDYDPTHGQADEYRALARKIHENKMFVIPKPLEIEELESLLIDFGIAN</sequence>